<organism>
    <name type="scientific">Solanum lycopersicum</name>
    <name type="common">Tomato</name>
    <name type="synonym">Lycopersicon esculentum</name>
    <dbReference type="NCBI Taxonomy" id="4081"/>
    <lineage>
        <taxon>Eukaryota</taxon>
        <taxon>Viridiplantae</taxon>
        <taxon>Streptophyta</taxon>
        <taxon>Embryophyta</taxon>
        <taxon>Tracheophyta</taxon>
        <taxon>Spermatophyta</taxon>
        <taxon>Magnoliopsida</taxon>
        <taxon>eudicotyledons</taxon>
        <taxon>Gunneridae</taxon>
        <taxon>Pentapetalae</taxon>
        <taxon>asterids</taxon>
        <taxon>lamiids</taxon>
        <taxon>Solanales</taxon>
        <taxon>Solanaceae</taxon>
        <taxon>Solanoideae</taxon>
        <taxon>Solaneae</taxon>
        <taxon>Solanum</taxon>
        <taxon>Solanum subgen. Lycopersicon</taxon>
    </lineage>
</organism>
<gene>
    <name evidence="6" type="primary">CYP707A1</name>
</gene>
<evidence type="ECO:0000250" key="1">
    <source>
        <dbReference type="UniProtKB" id="Q949P1"/>
    </source>
</evidence>
<evidence type="ECO:0000250" key="2">
    <source>
        <dbReference type="UniProtKB" id="Q96242"/>
    </source>
</evidence>
<evidence type="ECO:0000255" key="3"/>
<evidence type="ECO:0000269" key="4">
    <source>
    </source>
</evidence>
<evidence type="ECO:0000269" key="5">
    <source>
    </source>
</evidence>
<evidence type="ECO:0000303" key="6">
    <source>
    </source>
</evidence>
<evidence type="ECO:0000305" key="7"/>
<name>ABAH1_SOLLC</name>
<comment type="function">
    <text evidence="4">Involved in the oxidative degradation of abscisic acid, especially in pollinated ovaries.</text>
</comment>
<comment type="catalytic activity">
    <reaction evidence="1">
        <text>2-cis-(+)-abscisate + reduced [NADPH--hemoprotein reductase] + O2 = (+)-8'-hydroxyabscisate + oxidized [NADPH--hemoprotein reductase] + H2O + H(+)</text>
        <dbReference type="Rhea" id="RHEA:12897"/>
        <dbReference type="Rhea" id="RHEA-COMP:11964"/>
        <dbReference type="Rhea" id="RHEA-COMP:11965"/>
        <dbReference type="ChEBI" id="CHEBI:15377"/>
        <dbReference type="ChEBI" id="CHEBI:15378"/>
        <dbReference type="ChEBI" id="CHEBI:15379"/>
        <dbReference type="ChEBI" id="CHEBI:37569"/>
        <dbReference type="ChEBI" id="CHEBI:57618"/>
        <dbReference type="ChEBI" id="CHEBI:58210"/>
        <dbReference type="ChEBI" id="CHEBI:58490"/>
        <dbReference type="EC" id="1.14.14.137"/>
    </reaction>
</comment>
<comment type="cofactor">
    <cofactor evidence="2">
        <name>heme</name>
        <dbReference type="ChEBI" id="CHEBI:30413"/>
    </cofactor>
</comment>
<comment type="pathway">
    <text evidence="1">Plant hormone degradation; abscisic acid degradation.</text>
</comment>
<comment type="subcellular location">
    <subcellularLocation>
        <location evidence="3">Membrane</location>
        <topology evidence="3">Single-pass membrane protein</topology>
    </subcellularLocation>
</comment>
<comment type="tissue specificity">
    <text evidence="4">Expressed in ovaries (specifically in ovules and placenta), sepals, petals and pedicels.</text>
</comment>
<comment type="developmental stage">
    <text evidence="4">In unpollinated ovaries, present in the placenta, but not in ovules and pericarp. In pollinated ovaries, accumulates mostly in the placenta and ovules and, at low levels, in the pericarp.</text>
</comment>
<comment type="induction">
    <text evidence="4 5">Accumulates strongly after pollination in whole ovaries. Induced by auxin (4-Cl-IAA) treatment and abscisic acid (ABA) (PubMed:19322584). First transiently repressed (1 day after treatment) and later induced (2 days after treatment) by abscisic acid (ABA) and dehydration (PubMed:25039074).</text>
</comment>
<comment type="similarity">
    <text evidence="7">Belongs to the cytochrome P450 family.</text>
</comment>
<feature type="chain" id="PRO_0000445689" description="Abscisic acid 8'-hydroxylase CYP707A1">
    <location>
        <begin position="1"/>
        <end position="476"/>
    </location>
</feature>
<feature type="transmembrane region" description="Helical" evidence="3">
    <location>
        <begin position="5"/>
        <end position="25"/>
    </location>
</feature>
<feature type="binding site" description="axial binding residue" evidence="2">
    <location>
        <position position="422"/>
    </location>
    <ligand>
        <name>heme</name>
        <dbReference type="ChEBI" id="CHEBI:30413"/>
    </ligand>
    <ligandPart>
        <name>Fe</name>
        <dbReference type="ChEBI" id="CHEBI:18248"/>
    </ligandPart>
</feature>
<protein>
    <recommendedName>
        <fullName evidence="7">Abscisic acid 8'-hydroxylase CYP707A1</fullName>
        <shortName evidence="7">ABA 8'-hydroxylase CYP707A1</shortName>
        <shortName evidence="6">SlCYP707A1</shortName>
        <ecNumber evidence="1">1.14.14.137</ecNumber>
    </recommendedName>
    <alternativeName>
        <fullName evidence="6">Cytochrome P450 707A1</fullName>
    </alternativeName>
</protein>
<sequence>MVNYFEIFLYISMFVLGYLSYYFCFGKNNNSSSKKNAYKLPPGSMGWPYIGETLQLYSQDPNAFFINRQRRFGEIFKTKILGCPCVMLASPEAARFVLVNQANLFKPTYPKSKENLIGQSAIFFHQGDYHNHLRKLVQAPLNPESIRNQIPYIEELSISALNSWVGGHVVNTYHEMKKFSFEVGILAIFGHLDGHVKEELKKNYSIVDKGYNSFPINLPGTLYRKALQARKKLGKILSEIIREMKEKKTLEKGLLSCFLNAKEEKGFLVLNEDQIADNIIGVLFAAQDTTASVLTWIIKYLHDNPKLLECVKAEQKVIWQSNEQENHGLTWTQTRKMPITSRVVLETLRMASIISFAFREAVADVEYKGYLIPKGWKVMPLFRNIHHNPEFFPDPQKFDPSRFENAPKPNTFMPFGSGVHACPGNELAKLEILIMTHHLVTKFRWEVVGSGSGIQYGPFPVPLGGLAARFWKTTST</sequence>
<keyword id="KW-0349">Heme</keyword>
<keyword id="KW-0408">Iron</keyword>
<keyword id="KW-0472">Membrane</keyword>
<keyword id="KW-0479">Metal-binding</keyword>
<keyword id="KW-0503">Monooxygenase</keyword>
<keyword id="KW-0560">Oxidoreductase</keyword>
<keyword id="KW-1185">Reference proteome</keyword>
<keyword id="KW-0812">Transmembrane</keyword>
<keyword id="KW-1133">Transmembrane helix</keyword>
<proteinExistence type="evidence at transcript level"/>
<accession>A9QNE7</accession>
<dbReference type="EC" id="1.14.14.137" evidence="1"/>
<dbReference type="EMBL" id="EU183406">
    <property type="protein sequence ID" value="ABX38720.1"/>
    <property type="molecule type" value="mRNA"/>
</dbReference>
<dbReference type="RefSeq" id="NP_001234517.1">
    <property type="nucleotide sequence ID" value="NM_001247588.2"/>
</dbReference>
<dbReference type="SMR" id="A9QNE7"/>
<dbReference type="FunCoup" id="A9QNE7">
    <property type="interactions" value="153"/>
</dbReference>
<dbReference type="STRING" id="4081.A9QNE7"/>
<dbReference type="PaxDb" id="4081-Solyc04g078900.2.1"/>
<dbReference type="EnsemblPlants" id="Solyc04g078900.3.1">
    <property type="protein sequence ID" value="Solyc04g078900.3.1"/>
    <property type="gene ID" value="Solyc04g078900.3"/>
</dbReference>
<dbReference type="GeneID" id="100136887"/>
<dbReference type="Gramene" id="Solyc04g078900.3.1">
    <property type="protein sequence ID" value="Solyc04g078900.3.1"/>
    <property type="gene ID" value="Solyc04g078900.3"/>
</dbReference>
<dbReference type="KEGG" id="sly:100136887"/>
<dbReference type="eggNOG" id="KOG0157">
    <property type="taxonomic scope" value="Eukaryota"/>
</dbReference>
<dbReference type="HOGENOM" id="CLU_001570_15_5_1"/>
<dbReference type="InParanoid" id="A9QNE7"/>
<dbReference type="OMA" id="EILIMTH"/>
<dbReference type="OrthoDB" id="1372046at2759"/>
<dbReference type="PhylomeDB" id="A9QNE7"/>
<dbReference type="BRENDA" id="1.14.14.137">
    <property type="organism ID" value="3101"/>
</dbReference>
<dbReference type="UniPathway" id="UPA00093"/>
<dbReference type="Proteomes" id="UP000004994">
    <property type="component" value="Chromosome 4"/>
</dbReference>
<dbReference type="GO" id="GO:0016020">
    <property type="term" value="C:membrane"/>
    <property type="evidence" value="ECO:0007669"/>
    <property type="project" value="UniProtKB-SubCell"/>
</dbReference>
<dbReference type="GO" id="GO:0010295">
    <property type="term" value="F:(+)-abscisic acid 8'-hydroxylase activity"/>
    <property type="evidence" value="ECO:0000318"/>
    <property type="project" value="GO_Central"/>
</dbReference>
<dbReference type="GO" id="GO:0020037">
    <property type="term" value="F:heme binding"/>
    <property type="evidence" value="ECO:0007669"/>
    <property type="project" value="InterPro"/>
</dbReference>
<dbReference type="GO" id="GO:0005506">
    <property type="term" value="F:iron ion binding"/>
    <property type="evidence" value="ECO:0007669"/>
    <property type="project" value="InterPro"/>
</dbReference>
<dbReference type="GO" id="GO:0046345">
    <property type="term" value="P:abscisic acid catabolic process"/>
    <property type="evidence" value="ECO:0000315"/>
    <property type="project" value="UniProtKB"/>
</dbReference>
<dbReference type="GO" id="GO:0009856">
    <property type="term" value="P:pollination"/>
    <property type="evidence" value="ECO:0000270"/>
    <property type="project" value="UniProtKB"/>
</dbReference>
<dbReference type="GO" id="GO:0009737">
    <property type="term" value="P:response to abscisic acid"/>
    <property type="evidence" value="ECO:0000270"/>
    <property type="project" value="UniProtKB"/>
</dbReference>
<dbReference type="GO" id="GO:0009733">
    <property type="term" value="P:response to auxin"/>
    <property type="evidence" value="ECO:0000270"/>
    <property type="project" value="UniProtKB"/>
</dbReference>
<dbReference type="GO" id="GO:0009414">
    <property type="term" value="P:response to water deprivation"/>
    <property type="evidence" value="ECO:0000270"/>
    <property type="project" value="UniProtKB"/>
</dbReference>
<dbReference type="CDD" id="cd11043">
    <property type="entry name" value="CYP90-like"/>
    <property type="match status" value="1"/>
</dbReference>
<dbReference type="FunFam" id="1.10.630.10:FF:000014">
    <property type="entry name" value="Abscisic acid 8"/>
    <property type="match status" value="1"/>
</dbReference>
<dbReference type="Gene3D" id="1.10.630.10">
    <property type="entry name" value="Cytochrome P450"/>
    <property type="match status" value="1"/>
</dbReference>
<dbReference type="InterPro" id="IPR001128">
    <property type="entry name" value="Cyt_P450"/>
</dbReference>
<dbReference type="InterPro" id="IPR017972">
    <property type="entry name" value="Cyt_P450_CS"/>
</dbReference>
<dbReference type="InterPro" id="IPR002401">
    <property type="entry name" value="Cyt_P450_E_grp-I"/>
</dbReference>
<dbReference type="InterPro" id="IPR036396">
    <property type="entry name" value="Cyt_P450_sf"/>
</dbReference>
<dbReference type="PANTHER" id="PTHR24286:SF376">
    <property type="entry name" value="ABSCISIC ACID 8'-HYDROXYLASE 4"/>
    <property type="match status" value="1"/>
</dbReference>
<dbReference type="PANTHER" id="PTHR24286">
    <property type="entry name" value="CYTOCHROME P450 26"/>
    <property type="match status" value="1"/>
</dbReference>
<dbReference type="Pfam" id="PF00067">
    <property type="entry name" value="p450"/>
    <property type="match status" value="1"/>
</dbReference>
<dbReference type="PRINTS" id="PR00463">
    <property type="entry name" value="EP450I"/>
</dbReference>
<dbReference type="PRINTS" id="PR00385">
    <property type="entry name" value="P450"/>
</dbReference>
<dbReference type="SUPFAM" id="SSF48264">
    <property type="entry name" value="Cytochrome P450"/>
    <property type="match status" value="1"/>
</dbReference>
<dbReference type="PROSITE" id="PS00086">
    <property type="entry name" value="CYTOCHROME_P450"/>
    <property type="match status" value="1"/>
</dbReference>
<reference key="1">
    <citation type="journal article" date="2009" name="Planta">
        <title>Abscisic acid levels in tomato ovaries are regulated by LeNCED1 and SlCYP707A1.</title>
        <authorList>
            <person name="Nitsch L.M."/>
            <person name="Oplaat C."/>
            <person name="Feron R."/>
            <person name="Ma Q."/>
            <person name="Wolters-Arts M."/>
            <person name="Hedden P."/>
            <person name="Mariani C."/>
            <person name="Vriezen W.H."/>
        </authorList>
    </citation>
    <scope>NUCLEOTIDE SEQUENCE [MRNA]</scope>
    <scope>FUNCTION</scope>
    <scope>TISSUE SPECIFICITY</scope>
    <scope>INDUCTION BY POLLINATION; AUXIN AND ABSCISIC ACID</scope>
    <scope>DEVELOPMENTAL STAGE</scope>
    <source>
        <strain>cv. Moneymaker</strain>
    </source>
</reference>
<reference key="2">
    <citation type="journal article" date="2012" name="Nature">
        <title>The tomato genome sequence provides insights into fleshy fruit evolution.</title>
        <authorList>
            <consortium name="Tomato Genome Consortium"/>
        </authorList>
    </citation>
    <scope>NUCLEOTIDE SEQUENCE [LARGE SCALE GENOMIC DNA]</scope>
    <source>
        <strain>cv. Heinz 1706</strain>
    </source>
</reference>
<reference key="3">
    <citation type="journal article" date="2014" name="J. Exp. Bot.">
        <title>SlNCED1 and SlCYP707A2: key genes involved in ABA metabolism during tomato fruit ripening.</title>
        <authorList>
            <person name="Ji K."/>
            <person name="Kai W."/>
            <person name="Zhao B."/>
            <person name="Sun Y."/>
            <person name="Yuan B."/>
            <person name="Dai S."/>
            <person name="Li Q."/>
            <person name="Chen P."/>
            <person name="Wang Y."/>
            <person name="Pei Y."/>
            <person name="Wang H."/>
            <person name="Guo Y."/>
            <person name="Leng P."/>
        </authorList>
    </citation>
    <scope>INDUCTION BY ABIOTIC STRESS</scope>
    <source>
        <strain>cv. Jia Bao</strain>
    </source>
</reference>